<accession>C5BCM3</accession>
<feature type="chain" id="PRO_1000215735" description="NAD-dependent malic enzyme">
    <location>
        <begin position="1"/>
        <end position="565"/>
    </location>
</feature>
<feature type="active site" description="Proton donor" evidence="1">
    <location>
        <position position="104"/>
    </location>
</feature>
<feature type="active site" description="Proton acceptor" evidence="1">
    <location>
        <position position="175"/>
    </location>
</feature>
<feature type="binding site" evidence="1">
    <location>
        <position position="157"/>
    </location>
    <ligand>
        <name>NAD(+)</name>
        <dbReference type="ChEBI" id="CHEBI:57540"/>
    </ligand>
</feature>
<feature type="binding site" evidence="1">
    <location>
        <position position="246"/>
    </location>
    <ligand>
        <name>a divalent metal cation</name>
        <dbReference type="ChEBI" id="CHEBI:60240"/>
    </ligand>
</feature>
<feature type="binding site" evidence="1">
    <location>
        <position position="247"/>
    </location>
    <ligand>
        <name>a divalent metal cation</name>
        <dbReference type="ChEBI" id="CHEBI:60240"/>
    </ligand>
</feature>
<feature type="binding site" evidence="1">
    <location>
        <position position="270"/>
    </location>
    <ligand>
        <name>a divalent metal cation</name>
        <dbReference type="ChEBI" id="CHEBI:60240"/>
    </ligand>
</feature>
<feature type="binding site" evidence="1">
    <location>
        <position position="270"/>
    </location>
    <ligand>
        <name>NAD(+)</name>
        <dbReference type="ChEBI" id="CHEBI:57540"/>
    </ligand>
</feature>
<feature type="binding site" evidence="1">
    <location>
        <position position="418"/>
    </location>
    <ligand>
        <name>NAD(+)</name>
        <dbReference type="ChEBI" id="CHEBI:57540"/>
    </ligand>
</feature>
<feature type="site" description="Important for activity" evidence="1">
    <location>
        <position position="270"/>
    </location>
</feature>
<keyword id="KW-0479">Metal-binding</keyword>
<keyword id="KW-0520">NAD</keyword>
<keyword id="KW-0560">Oxidoreductase</keyword>
<sequence length="565" mass="62919">MDLEHESKRPLYIPYAGPILLEFPLLNKGSAFSEEERNTFNLNGLLPEAIETIEEQVERAYRQFCDFHSATEQHIYLRNIQDTNETLFYRLLRSHLSEMMPIIYTPTVGEACEHFSYIYRRARGLFIAYPNRDRIDDMLQNATKQNVKVIVVTDGERILGLGDQGIGGMGIPIGKLSLYTACGGISPAYTLPVVLDVGTNNPQRLNDPLYMGWRHPRITGDEYNAFVEEFIQAVKRRWPDVLLQFEDFAQKNAMPLLSRYRDRLCCFNDDIQGTAAVTLGSLIAASHAAGSRLRDQTITFLGAGSAGCGIAEQIIAQMIAEGLSDEEARTRIFMVDRFGLLTDRLPNLLDFQSRLVQKRQALAGWQTESEGISLLDVVRNAHPTVLIGVSGQPGLFSEAIVREMHSHCPRPIIMPLSNPTSRVEARPEDIINWTDGAALVASGSPFEPVLYQGERYPIAQCNNAYIFPGIGLGVLASGARRVTDGMLMAASRALADSSPLARDGHGSLLPDLKDIQQVSRDIAFQVAKAAQRQGVAVQTSDEALLQAIEHNFWLPIYRSYKRTSF</sequence>
<evidence type="ECO:0000255" key="1">
    <source>
        <dbReference type="HAMAP-Rule" id="MF_01619"/>
    </source>
</evidence>
<dbReference type="EC" id="1.1.1.38" evidence="1"/>
<dbReference type="EMBL" id="CP001600">
    <property type="protein sequence ID" value="ACR68478.1"/>
    <property type="molecule type" value="Genomic_DNA"/>
</dbReference>
<dbReference type="RefSeq" id="WP_015870645.1">
    <property type="nucleotide sequence ID" value="NC_012779.2"/>
</dbReference>
<dbReference type="SMR" id="C5BCM3"/>
<dbReference type="STRING" id="67780.B6E78_16660"/>
<dbReference type="GeneID" id="69538296"/>
<dbReference type="KEGG" id="eic:NT01EI_1281"/>
<dbReference type="PATRIC" id="fig|634503.3.peg.1156"/>
<dbReference type="HOGENOM" id="CLU_011405_5_2_6"/>
<dbReference type="OrthoDB" id="3314528at2"/>
<dbReference type="Proteomes" id="UP000001485">
    <property type="component" value="Chromosome"/>
</dbReference>
<dbReference type="GO" id="GO:0005829">
    <property type="term" value="C:cytosol"/>
    <property type="evidence" value="ECO:0007669"/>
    <property type="project" value="TreeGrafter"/>
</dbReference>
<dbReference type="GO" id="GO:0004471">
    <property type="term" value="F:malate dehydrogenase (decarboxylating) (NAD+) activity"/>
    <property type="evidence" value="ECO:0007669"/>
    <property type="project" value="UniProtKB-UniRule"/>
</dbReference>
<dbReference type="GO" id="GO:0046872">
    <property type="term" value="F:metal ion binding"/>
    <property type="evidence" value="ECO:0007669"/>
    <property type="project" value="UniProtKB-KW"/>
</dbReference>
<dbReference type="GO" id="GO:0051287">
    <property type="term" value="F:NAD binding"/>
    <property type="evidence" value="ECO:0007669"/>
    <property type="project" value="InterPro"/>
</dbReference>
<dbReference type="GO" id="GO:0008948">
    <property type="term" value="F:oxaloacetate decarboxylase activity"/>
    <property type="evidence" value="ECO:0007669"/>
    <property type="project" value="UniProtKB-UniRule"/>
</dbReference>
<dbReference type="GO" id="GO:0006108">
    <property type="term" value="P:malate metabolic process"/>
    <property type="evidence" value="ECO:0007669"/>
    <property type="project" value="TreeGrafter"/>
</dbReference>
<dbReference type="CDD" id="cd05312">
    <property type="entry name" value="NAD_bind_1_malic_enz"/>
    <property type="match status" value="1"/>
</dbReference>
<dbReference type="FunFam" id="3.40.50.10380:FF:000001">
    <property type="entry name" value="NAD-dependent malic enzyme"/>
    <property type="match status" value="1"/>
</dbReference>
<dbReference type="FunFam" id="3.40.50.720:FF:000055">
    <property type="entry name" value="NAD-dependent malic enzyme"/>
    <property type="match status" value="1"/>
</dbReference>
<dbReference type="Gene3D" id="3.40.50.10380">
    <property type="entry name" value="Malic enzyme, N-terminal domain"/>
    <property type="match status" value="1"/>
</dbReference>
<dbReference type="Gene3D" id="3.40.50.720">
    <property type="entry name" value="NAD(P)-binding Rossmann-like Domain"/>
    <property type="match status" value="1"/>
</dbReference>
<dbReference type="HAMAP" id="MF_01619">
    <property type="entry name" value="NAD_malic_enz"/>
    <property type="match status" value="1"/>
</dbReference>
<dbReference type="InterPro" id="IPR046346">
    <property type="entry name" value="Aminoacid_DH-like_N_sf"/>
</dbReference>
<dbReference type="InterPro" id="IPR015884">
    <property type="entry name" value="Malic_enzyme_CS"/>
</dbReference>
<dbReference type="InterPro" id="IPR012301">
    <property type="entry name" value="Malic_N_dom"/>
</dbReference>
<dbReference type="InterPro" id="IPR037062">
    <property type="entry name" value="Malic_N_dom_sf"/>
</dbReference>
<dbReference type="InterPro" id="IPR012302">
    <property type="entry name" value="Malic_NAD-bd"/>
</dbReference>
<dbReference type="InterPro" id="IPR001891">
    <property type="entry name" value="Malic_OxRdtase"/>
</dbReference>
<dbReference type="InterPro" id="IPR036291">
    <property type="entry name" value="NAD(P)-bd_dom_sf"/>
</dbReference>
<dbReference type="InterPro" id="IPR023667">
    <property type="entry name" value="NAD_malic_enz_proteobac"/>
</dbReference>
<dbReference type="NCBIfam" id="NF010052">
    <property type="entry name" value="PRK13529.1"/>
    <property type="match status" value="1"/>
</dbReference>
<dbReference type="PANTHER" id="PTHR23406">
    <property type="entry name" value="MALIC ENZYME-RELATED"/>
    <property type="match status" value="1"/>
</dbReference>
<dbReference type="PANTHER" id="PTHR23406:SF34">
    <property type="entry name" value="NAD-DEPENDENT MALIC ENZYME, MITOCHONDRIAL"/>
    <property type="match status" value="1"/>
</dbReference>
<dbReference type="Pfam" id="PF00390">
    <property type="entry name" value="malic"/>
    <property type="match status" value="1"/>
</dbReference>
<dbReference type="Pfam" id="PF03949">
    <property type="entry name" value="Malic_M"/>
    <property type="match status" value="1"/>
</dbReference>
<dbReference type="PIRSF" id="PIRSF000106">
    <property type="entry name" value="ME"/>
    <property type="match status" value="1"/>
</dbReference>
<dbReference type="PRINTS" id="PR00072">
    <property type="entry name" value="MALOXRDTASE"/>
</dbReference>
<dbReference type="SMART" id="SM01274">
    <property type="entry name" value="malic"/>
    <property type="match status" value="1"/>
</dbReference>
<dbReference type="SMART" id="SM00919">
    <property type="entry name" value="Malic_M"/>
    <property type="match status" value="1"/>
</dbReference>
<dbReference type="SUPFAM" id="SSF53223">
    <property type="entry name" value="Aminoacid dehydrogenase-like, N-terminal domain"/>
    <property type="match status" value="1"/>
</dbReference>
<dbReference type="SUPFAM" id="SSF51735">
    <property type="entry name" value="NAD(P)-binding Rossmann-fold domains"/>
    <property type="match status" value="1"/>
</dbReference>
<dbReference type="PROSITE" id="PS00331">
    <property type="entry name" value="MALIC_ENZYMES"/>
    <property type="match status" value="1"/>
</dbReference>
<gene>
    <name evidence="1" type="primary">maeA</name>
    <name type="ordered locus">NT01EI_1281</name>
</gene>
<reference key="1">
    <citation type="submission" date="2009-03" db="EMBL/GenBank/DDBJ databases">
        <title>Complete genome sequence of Edwardsiella ictaluri 93-146.</title>
        <authorList>
            <person name="Williams M.L."/>
            <person name="Gillaspy A.F."/>
            <person name="Dyer D.W."/>
            <person name="Thune R.L."/>
            <person name="Waldbieser G.C."/>
            <person name="Schuster S.C."/>
            <person name="Gipson J."/>
            <person name="Zaitshik J."/>
            <person name="Landry C."/>
            <person name="Lawrence M.L."/>
        </authorList>
    </citation>
    <scope>NUCLEOTIDE SEQUENCE [LARGE SCALE GENOMIC DNA]</scope>
    <source>
        <strain>93-146</strain>
    </source>
</reference>
<comment type="catalytic activity">
    <reaction evidence="1">
        <text>(S)-malate + NAD(+) = pyruvate + CO2 + NADH</text>
        <dbReference type="Rhea" id="RHEA:12653"/>
        <dbReference type="ChEBI" id="CHEBI:15361"/>
        <dbReference type="ChEBI" id="CHEBI:15589"/>
        <dbReference type="ChEBI" id="CHEBI:16526"/>
        <dbReference type="ChEBI" id="CHEBI:57540"/>
        <dbReference type="ChEBI" id="CHEBI:57945"/>
        <dbReference type="EC" id="1.1.1.38"/>
    </reaction>
</comment>
<comment type="catalytic activity">
    <reaction evidence="1">
        <text>oxaloacetate + H(+) = pyruvate + CO2</text>
        <dbReference type="Rhea" id="RHEA:15641"/>
        <dbReference type="ChEBI" id="CHEBI:15361"/>
        <dbReference type="ChEBI" id="CHEBI:15378"/>
        <dbReference type="ChEBI" id="CHEBI:16452"/>
        <dbReference type="ChEBI" id="CHEBI:16526"/>
        <dbReference type="EC" id="1.1.1.38"/>
    </reaction>
</comment>
<comment type="cofactor">
    <cofactor evidence="1">
        <name>Mg(2+)</name>
        <dbReference type="ChEBI" id="CHEBI:18420"/>
    </cofactor>
    <cofactor evidence="1">
        <name>Mn(2+)</name>
        <dbReference type="ChEBI" id="CHEBI:29035"/>
    </cofactor>
    <text evidence="1">Divalent metal cations. Prefers magnesium or manganese.</text>
</comment>
<comment type="subunit">
    <text evidence="1">Homotetramer.</text>
</comment>
<comment type="similarity">
    <text evidence="1">Belongs to the malic enzymes family.</text>
</comment>
<proteinExistence type="inferred from homology"/>
<protein>
    <recommendedName>
        <fullName evidence="1">NAD-dependent malic enzyme</fullName>
        <shortName evidence="1">NAD-ME</shortName>
        <ecNumber evidence="1">1.1.1.38</ecNumber>
    </recommendedName>
</protein>
<name>MAO1_EDWI9</name>
<organism>
    <name type="scientific">Edwardsiella ictaluri (strain 93-146)</name>
    <dbReference type="NCBI Taxonomy" id="634503"/>
    <lineage>
        <taxon>Bacteria</taxon>
        <taxon>Pseudomonadati</taxon>
        <taxon>Pseudomonadota</taxon>
        <taxon>Gammaproteobacteria</taxon>
        <taxon>Enterobacterales</taxon>
        <taxon>Hafniaceae</taxon>
        <taxon>Edwardsiella</taxon>
    </lineage>
</organism>